<proteinExistence type="evidence at protein level"/>
<dbReference type="EMBL" id="GU293026">
    <property type="protein sequence ID" value="ADB56842.1"/>
    <property type="molecule type" value="mRNA"/>
</dbReference>
<dbReference type="SMR" id="D2Y2E9"/>
<dbReference type="ArachnoServer" id="AS001945">
    <property type="toxin name" value="omega-theraphotoxin-Hhn1f"/>
</dbReference>
<dbReference type="GO" id="GO:0005576">
    <property type="term" value="C:extracellular region"/>
    <property type="evidence" value="ECO:0007669"/>
    <property type="project" value="UniProtKB-SubCell"/>
</dbReference>
<dbReference type="GO" id="GO:0008200">
    <property type="term" value="F:ion channel inhibitor activity"/>
    <property type="evidence" value="ECO:0007669"/>
    <property type="project" value="InterPro"/>
</dbReference>
<dbReference type="GO" id="GO:0090729">
    <property type="term" value="F:toxin activity"/>
    <property type="evidence" value="ECO:0007669"/>
    <property type="project" value="UniProtKB-KW"/>
</dbReference>
<dbReference type="InterPro" id="IPR011696">
    <property type="entry name" value="Huwentoxin-1"/>
</dbReference>
<dbReference type="InterPro" id="IPR013140">
    <property type="entry name" value="Huwentoxin_CS1"/>
</dbReference>
<dbReference type="Pfam" id="PF07740">
    <property type="entry name" value="Toxin_12"/>
    <property type="match status" value="1"/>
</dbReference>
<dbReference type="SUPFAM" id="SSF57059">
    <property type="entry name" value="omega toxin-like"/>
    <property type="match status" value="1"/>
</dbReference>
<dbReference type="PROSITE" id="PS60021">
    <property type="entry name" value="HWTX_1"/>
    <property type="match status" value="1"/>
</dbReference>
<reference key="1">
    <citation type="journal article" date="2010" name="J. Proteome Res.">
        <title>Molecular diversification of peptide toxins from the tarantula Haplopelma hainanum (Ornithoctonus hainana) venom based on transcriptomic, peptidomic, and genomic analyses.</title>
        <authorList>
            <person name="Tang X."/>
            <person name="Zhang Y."/>
            <person name="Hu W."/>
            <person name="Xu D."/>
            <person name="Tao H."/>
            <person name="Yang X."/>
            <person name="Li Y."/>
            <person name="Jiang L."/>
            <person name="Liang S."/>
        </authorList>
    </citation>
    <scope>NUCLEOTIDE SEQUENCE [LARGE SCALE MRNA]</scope>
    <scope>PROTEIN SEQUENCE OF 51-85</scope>
    <scope>IDENTIFICATION BY MASS SPECTROMETRY</scope>
    <source>
        <tissue>Venom</tissue>
        <tissue>Venom gland</tissue>
    </source>
</reference>
<feature type="signal peptide" evidence="2">
    <location>
        <begin position="1"/>
        <end position="21"/>
    </location>
</feature>
<feature type="propeptide" id="PRO_0000400653" evidence="3">
    <location>
        <begin position="22"/>
        <end position="50"/>
    </location>
</feature>
<feature type="peptide" id="PRO_0000400654" description="Omega-theraphotoxin-Hhn1f 3">
    <location>
        <begin position="51"/>
        <end position="86"/>
    </location>
</feature>
<feature type="disulfide bond" evidence="1">
    <location>
        <begin position="52"/>
        <end position="66"/>
    </location>
</feature>
<feature type="disulfide bond" evidence="1">
    <location>
        <begin position="59"/>
        <end position="71"/>
    </location>
</feature>
<feature type="disulfide bond" evidence="1">
    <location>
        <begin position="65"/>
        <end position="78"/>
    </location>
</feature>
<sequence length="86" mass="9645">MKSIVFVALFGLALLAVACSASEDAHKELLKEVVRAMVVDKTDAVQAEERECRWYLGGCSQDGDCCKHLQCHSNYEWCIWDGTFSK</sequence>
<accession>D2Y2E9</accession>
<protein>
    <recommendedName>
        <fullName>Omega-theraphotoxin-Hhn1f 3</fullName>
        <shortName>Omega-TRTX-Hhn1f</shortName>
    </recommendedName>
    <alternativeName>
        <fullName>Hainantoxin-IX.3</fullName>
        <shortName>HNTX-IX.3</shortName>
    </alternativeName>
    <alternativeName>
        <fullName>Peptide F1-29.54</fullName>
    </alternativeName>
</protein>
<name>H9A03_CYRHA</name>
<comment type="function">
    <text evidence="1">Ion channel inhibitor.</text>
</comment>
<comment type="subcellular location">
    <subcellularLocation>
        <location>Secreted</location>
    </subcellularLocation>
</comment>
<comment type="tissue specificity">
    <text>Expressed by the venom gland.</text>
</comment>
<comment type="domain">
    <text evidence="1">The presence of a 'disulfide through disulfide knot' structurally defines this protein as a knottin.</text>
</comment>
<comment type="similarity">
    <text evidence="4">Belongs to the neurotoxin 10 (Hwtx-1) family. 17 (Hntx-9) subfamily.</text>
</comment>
<organism>
    <name type="scientific">Cyriopagopus hainanus</name>
    <name type="common">Chinese bird spider</name>
    <name type="synonym">Haplopelma hainanum</name>
    <dbReference type="NCBI Taxonomy" id="209901"/>
    <lineage>
        <taxon>Eukaryota</taxon>
        <taxon>Metazoa</taxon>
        <taxon>Ecdysozoa</taxon>
        <taxon>Arthropoda</taxon>
        <taxon>Chelicerata</taxon>
        <taxon>Arachnida</taxon>
        <taxon>Araneae</taxon>
        <taxon>Mygalomorphae</taxon>
        <taxon>Theraphosidae</taxon>
        <taxon>Haplopelma</taxon>
    </lineage>
</organism>
<evidence type="ECO:0000250" key="1"/>
<evidence type="ECO:0000255" key="2"/>
<evidence type="ECO:0000269" key="3">
    <source>
    </source>
</evidence>
<evidence type="ECO:0000305" key="4"/>
<keyword id="KW-0903">Direct protein sequencing</keyword>
<keyword id="KW-1015">Disulfide bond</keyword>
<keyword id="KW-0872">Ion channel impairing toxin</keyword>
<keyword id="KW-0960">Knottin</keyword>
<keyword id="KW-0964">Secreted</keyword>
<keyword id="KW-0732">Signal</keyword>
<keyword id="KW-0800">Toxin</keyword>